<comment type="function">
    <text evidence="1">Probably functions as part of the RQC trigger (RQT) complex that activates the ribosome quality control (RQC) pathway, a pathway that degrades nascent peptide chains during problematic translation.</text>
</comment>
<comment type="subunit">
    <text evidence="1">Component of the RQT (ribosome quality control trigger) complex.</text>
</comment>
<comment type="subcellular location">
    <subcellularLocation>
        <location evidence="3">Cytoplasm</location>
        <location evidence="3">Cytosol</location>
    </subcellularLocation>
</comment>
<dbReference type="EMBL" id="CU329670">
    <property type="protein sequence ID" value="CAB16891.1"/>
    <property type="molecule type" value="Genomic_DNA"/>
</dbReference>
<dbReference type="PIR" id="T38275">
    <property type="entry name" value="T38275"/>
</dbReference>
<dbReference type="RefSeq" id="NP_593192.1">
    <property type="nucleotide sequence ID" value="NM_001018588.2"/>
</dbReference>
<dbReference type="BioGRID" id="278893">
    <property type="interactions" value="22"/>
</dbReference>
<dbReference type="FunCoup" id="O13855">
    <property type="interactions" value="252"/>
</dbReference>
<dbReference type="STRING" id="284812.O13855"/>
<dbReference type="iPTMnet" id="O13855"/>
<dbReference type="PaxDb" id="4896-SPAC1A6.01c.1"/>
<dbReference type="EnsemblFungi" id="SPAC1A6.01c.1">
    <property type="protein sequence ID" value="SPAC1A6.01c.1:pep"/>
    <property type="gene ID" value="SPAC1A6.01c"/>
</dbReference>
<dbReference type="GeneID" id="2542431"/>
<dbReference type="KEGG" id="spo:2542431"/>
<dbReference type="PomBase" id="SPAC1A6.01c"/>
<dbReference type="VEuPathDB" id="FungiDB:SPAC1A6.01c"/>
<dbReference type="eggNOG" id="KOG2845">
    <property type="taxonomic scope" value="Eukaryota"/>
</dbReference>
<dbReference type="HOGENOM" id="CLU_622748_0_0_1"/>
<dbReference type="InParanoid" id="O13855"/>
<dbReference type="OMA" id="MWASPQE"/>
<dbReference type="PhylomeDB" id="O13855"/>
<dbReference type="PRO" id="PR:O13855"/>
<dbReference type="Proteomes" id="UP000002485">
    <property type="component" value="Chromosome I"/>
</dbReference>
<dbReference type="GO" id="GO:0005829">
    <property type="term" value="C:cytosol"/>
    <property type="evidence" value="ECO:0007005"/>
    <property type="project" value="PomBase"/>
</dbReference>
<dbReference type="GO" id="GO:0005634">
    <property type="term" value="C:nucleus"/>
    <property type="evidence" value="ECO:0000318"/>
    <property type="project" value="GO_Central"/>
</dbReference>
<dbReference type="GO" id="GO:0180022">
    <property type="term" value="C:RQC-trigger complex"/>
    <property type="evidence" value="ECO:0000304"/>
    <property type="project" value="PomBase"/>
</dbReference>
<dbReference type="GO" id="GO:0008270">
    <property type="term" value="F:zinc ion binding"/>
    <property type="evidence" value="ECO:0000255"/>
    <property type="project" value="PomBase"/>
</dbReference>
<dbReference type="GO" id="GO:0045893">
    <property type="term" value="P:positive regulation of DNA-templated transcription"/>
    <property type="evidence" value="ECO:0000318"/>
    <property type="project" value="GO_Central"/>
</dbReference>
<dbReference type="GO" id="GO:0072344">
    <property type="term" value="P:rescue of stalled ribosome"/>
    <property type="evidence" value="ECO:0000303"/>
    <property type="project" value="PomBase"/>
</dbReference>
<dbReference type="InterPro" id="IPR039128">
    <property type="entry name" value="TRIP4-like"/>
</dbReference>
<dbReference type="InterPro" id="IPR009349">
    <property type="entry name" value="TRIP4/RQT4_C2HC5_Znf"/>
</dbReference>
<dbReference type="PANTHER" id="PTHR12963:SF4">
    <property type="entry name" value="ACTIVATING SIGNAL COINTEGRATOR 1"/>
    <property type="match status" value="1"/>
</dbReference>
<dbReference type="PANTHER" id="PTHR12963">
    <property type="entry name" value="THYROID RECEPTOR INTERACTING PROTEIN RELATED"/>
    <property type="match status" value="1"/>
</dbReference>
<dbReference type="Pfam" id="PF06221">
    <property type="entry name" value="zf-C2HC5"/>
    <property type="match status" value="1"/>
</dbReference>
<reference key="1">
    <citation type="journal article" date="2002" name="Nature">
        <title>The genome sequence of Schizosaccharomyces pombe.</title>
        <authorList>
            <person name="Wood V."/>
            <person name="Gwilliam R."/>
            <person name="Rajandream M.A."/>
            <person name="Lyne M.H."/>
            <person name="Lyne R."/>
            <person name="Stewart A."/>
            <person name="Sgouros J.G."/>
            <person name="Peat N."/>
            <person name="Hayles J."/>
            <person name="Baker S.G."/>
            <person name="Basham D."/>
            <person name="Bowman S."/>
            <person name="Brooks K."/>
            <person name="Brown D."/>
            <person name="Brown S."/>
            <person name="Chillingworth T."/>
            <person name="Churcher C.M."/>
            <person name="Collins M."/>
            <person name="Connor R."/>
            <person name="Cronin A."/>
            <person name="Davis P."/>
            <person name="Feltwell T."/>
            <person name="Fraser A."/>
            <person name="Gentles S."/>
            <person name="Goble A."/>
            <person name="Hamlin N."/>
            <person name="Harris D.E."/>
            <person name="Hidalgo J."/>
            <person name="Hodgson G."/>
            <person name="Holroyd S."/>
            <person name="Hornsby T."/>
            <person name="Howarth S."/>
            <person name="Huckle E.J."/>
            <person name="Hunt S."/>
            <person name="Jagels K."/>
            <person name="James K.D."/>
            <person name="Jones L."/>
            <person name="Jones M."/>
            <person name="Leather S."/>
            <person name="McDonald S."/>
            <person name="McLean J."/>
            <person name="Mooney P."/>
            <person name="Moule S."/>
            <person name="Mungall K.L."/>
            <person name="Murphy L.D."/>
            <person name="Niblett D."/>
            <person name="Odell C."/>
            <person name="Oliver K."/>
            <person name="O'Neil S."/>
            <person name="Pearson D."/>
            <person name="Quail M.A."/>
            <person name="Rabbinowitsch E."/>
            <person name="Rutherford K.M."/>
            <person name="Rutter S."/>
            <person name="Saunders D."/>
            <person name="Seeger K."/>
            <person name="Sharp S."/>
            <person name="Skelton J."/>
            <person name="Simmonds M.N."/>
            <person name="Squares R."/>
            <person name="Squares S."/>
            <person name="Stevens K."/>
            <person name="Taylor K."/>
            <person name="Taylor R.G."/>
            <person name="Tivey A."/>
            <person name="Walsh S.V."/>
            <person name="Warren T."/>
            <person name="Whitehead S."/>
            <person name="Woodward J.R."/>
            <person name="Volckaert G."/>
            <person name="Aert R."/>
            <person name="Robben J."/>
            <person name="Grymonprez B."/>
            <person name="Weltjens I."/>
            <person name="Vanstreels E."/>
            <person name="Rieger M."/>
            <person name="Schaefer M."/>
            <person name="Mueller-Auer S."/>
            <person name="Gabel C."/>
            <person name="Fuchs M."/>
            <person name="Duesterhoeft A."/>
            <person name="Fritzc C."/>
            <person name="Holzer E."/>
            <person name="Moestl D."/>
            <person name="Hilbert H."/>
            <person name="Borzym K."/>
            <person name="Langer I."/>
            <person name="Beck A."/>
            <person name="Lehrach H."/>
            <person name="Reinhardt R."/>
            <person name="Pohl T.M."/>
            <person name="Eger P."/>
            <person name="Zimmermann W."/>
            <person name="Wedler H."/>
            <person name="Wambutt R."/>
            <person name="Purnelle B."/>
            <person name="Goffeau A."/>
            <person name="Cadieu E."/>
            <person name="Dreano S."/>
            <person name="Gloux S."/>
            <person name="Lelaure V."/>
            <person name="Mottier S."/>
            <person name="Galibert F."/>
            <person name="Aves S.J."/>
            <person name="Xiang Z."/>
            <person name="Hunt C."/>
            <person name="Moore K."/>
            <person name="Hurst S.M."/>
            <person name="Lucas M."/>
            <person name="Rochet M."/>
            <person name="Gaillardin C."/>
            <person name="Tallada V.A."/>
            <person name="Garzon A."/>
            <person name="Thode G."/>
            <person name="Daga R.R."/>
            <person name="Cruzado L."/>
            <person name="Jimenez J."/>
            <person name="Sanchez M."/>
            <person name="del Rey F."/>
            <person name="Benito J."/>
            <person name="Dominguez A."/>
            <person name="Revuelta J.L."/>
            <person name="Moreno S."/>
            <person name="Armstrong J."/>
            <person name="Forsburg S.L."/>
            <person name="Cerutti L."/>
            <person name="Lowe T."/>
            <person name="McCombie W.R."/>
            <person name="Paulsen I."/>
            <person name="Potashkin J."/>
            <person name="Shpakovski G.V."/>
            <person name="Ussery D."/>
            <person name="Barrell B.G."/>
            <person name="Nurse P."/>
        </authorList>
    </citation>
    <scope>NUCLEOTIDE SEQUENCE [LARGE SCALE GENOMIC DNA]</scope>
    <source>
        <strain>972 / ATCC 24843</strain>
    </source>
</reference>
<reference key="2">
    <citation type="journal article" date="2006" name="Nat. Biotechnol.">
        <title>ORFeome cloning and global analysis of protein localization in the fission yeast Schizosaccharomyces pombe.</title>
        <authorList>
            <person name="Matsuyama A."/>
            <person name="Arai R."/>
            <person name="Yashiroda Y."/>
            <person name="Shirai A."/>
            <person name="Kamata A."/>
            <person name="Sekido S."/>
            <person name="Kobayashi Y."/>
            <person name="Hashimoto A."/>
            <person name="Hamamoto M."/>
            <person name="Hiraoka Y."/>
            <person name="Horinouchi S."/>
            <person name="Yoshida M."/>
        </authorList>
    </citation>
    <scope>SUBCELLULAR LOCATION [LARGE SCALE ANALYSIS]</scope>
</reference>
<reference key="3">
    <citation type="journal article" date="2008" name="J. Proteome Res.">
        <title>Phosphoproteome analysis of fission yeast.</title>
        <authorList>
            <person name="Wilson-Grady J.T."/>
            <person name="Villen J."/>
            <person name="Gygi S.P."/>
        </authorList>
    </citation>
    <scope>PHOSPHORYLATION [LARGE SCALE ANALYSIS] AT SER-70 AND SER-380</scope>
    <scope>IDENTIFICATION BY MASS SPECTROMETRY</scope>
</reference>
<name>RQT4_SCHPO</name>
<organism>
    <name type="scientific">Schizosaccharomyces pombe (strain 972 / ATCC 24843)</name>
    <name type="common">Fission yeast</name>
    <dbReference type="NCBI Taxonomy" id="284812"/>
    <lineage>
        <taxon>Eukaryota</taxon>
        <taxon>Fungi</taxon>
        <taxon>Dikarya</taxon>
        <taxon>Ascomycota</taxon>
        <taxon>Taphrinomycotina</taxon>
        <taxon>Schizosaccharomycetes</taxon>
        <taxon>Schizosaccharomycetales</taxon>
        <taxon>Schizosaccharomycetaceae</taxon>
        <taxon>Schizosaccharomyces</taxon>
    </lineage>
</organism>
<gene>
    <name type="ORF">SPAC1A6.01c</name>
    <name type="ORF">SPAC23C4.20c</name>
</gene>
<accession>O13855</accession>
<accession>Q9UTB9</accession>
<evidence type="ECO:0000250" key="1">
    <source>
        <dbReference type="UniProtKB" id="P36119"/>
    </source>
</evidence>
<evidence type="ECO:0000256" key="2">
    <source>
        <dbReference type="SAM" id="MobiDB-lite"/>
    </source>
</evidence>
<evidence type="ECO:0000269" key="3">
    <source>
    </source>
</evidence>
<evidence type="ECO:0000269" key="4">
    <source>
    </source>
</evidence>
<keyword id="KW-0963">Cytoplasm</keyword>
<keyword id="KW-0597">Phosphoprotein</keyword>
<keyword id="KW-1185">Reference proteome</keyword>
<proteinExistence type="evidence at protein level"/>
<sequence>MEKWTKENVLKILPVDDESAAMITSTALAVDSSEAAKDYWISLLGDSAETIEFISDFNQKRFHSTHSGNSPSIMKNKKNVTPNNNIRQKNTATSSHPSFYIANNKQKGYDEEMYKVNPASRNKSQSNNISSHEKSSKTTKNVSPGVMTSDLIPEKKSVKHNNSSSNRIEGLADIEKAIRQIEISQNINKAERRVCNCQGRKHPLNEAAPNCLNCGKIICIVEGIGPCTFCDNPVISKAQQLELIQELKHEGSRLKQAANQKRKSKTVSSKNNFQRLQNSSLHSIFLDPKQLEQKAQEAEERKNVLLNFDRTSAQRTRIIDEAADFDPTSLASDTWASPAEKALNLVRMQKAMAKKEKKKKKVLSISLSGKKVVVDQKEASSESSDEDQDELDNLTKVEGQSHSHNPKAPVIRNLPRPIYHQDLHSSHVAVPESILNKINQKWSKVQDDDGMPSML</sequence>
<feature type="chain" id="PRO_0000116731" description="RQC trigger complex subunit RQT4 homolog">
    <location>
        <begin position="1"/>
        <end position="455"/>
    </location>
</feature>
<feature type="region of interest" description="Disordered" evidence="2">
    <location>
        <begin position="64"/>
        <end position="98"/>
    </location>
</feature>
<feature type="region of interest" description="Disordered" evidence="2">
    <location>
        <begin position="118"/>
        <end position="148"/>
    </location>
</feature>
<feature type="compositionally biased region" description="Polar residues" evidence="2">
    <location>
        <begin position="65"/>
        <end position="98"/>
    </location>
</feature>
<feature type="compositionally biased region" description="Polar residues" evidence="2">
    <location>
        <begin position="119"/>
        <end position="130"/>
    </location>
</feature>
<feature type="modified residue" description="Phosphoserine" evidence="4">
    <location>
        <position position="70"/>
    </location>
</feature>
<feature type="modified residue" description="Phosphoserine" evidence="4">
    <location>
        <position position="380"/>
    </location>
</feature>
<protein>
    <recommendedName>
        <fullName>RQC trigger complex subunit RQT4 homolog</fullName>
    </recommendedName>
</protein>